<dbReference type="EC" id="3.6.5.3" evidence="1"/>
<dbReference type="EMBL" id="Y12310">
    <property type="protein sequence ID" value="CAA72977.1"/>
    <property type="molecule type" value="Genomic_DNA"/>
</dbReference>
<dbReference type="SMR" id="O31300"/>
<dbReference type="GO" id="GO:0005829">
    <property type="term" value="C:cytosol"/>
    <property type="evidence" value="ECO:0007669"/>
    <property type="project" value="TreeGrafter"/>
</dbReference>
<dbReference type="GO" id="GO:0005525">
    <property type="term" value="F:GTP binding"/>
    <property type="evidence" value="ECO:0007669"/>
    <property type="project" value="UniProtKB-KW"/>
</dbReference>
<dbReference type="GO" id="GO:0003924">
    <property type="term" value="F:GTPase activity"/>
    <property type="evidence" value="ECO:0007669"/>
    <property type="project" value="InterPro"/>
</dbReference>
<dbReference type="GO" id="GO:0003746">
    <property type="term" value="F:translation elongation factor activity"/>
    <property type="evidence" value="ECO:0007669"/>
    <property type="project" value="UniProtKB-KW"/>
</dbReference>
<dbReference type="CDD" id="cd01884">
    <property type="entry name" value="EF_Tu"/>
    <property type="match status" value="1"/>
</dbReference>
<dbReference type="CDD" id="cd03697">
    <property type="entry name" value="EFTU_II"/>
    <property type="match status" value="1"/>
</dbReference>
<dbReference type="CDD" id="cd03707">
    <property type="entry name" value="EFTU_III"/>
    <property type="match status" value="1"/>
</dbReference>
<dbReference type="FunFam" id="2.40.30.10:FF:000001">
    <property type="entry name" value="Elongation factor Tu"/>
    <property type="match status" value="1"/>
</dbReference>
<dbReference type="FunFam" id="3.40.50.300:FF:000003">
    <property type="entry name" value="Elongation factor Tu"/>
    <property type="match status" value="1"/>
</dbReference>
<dbReference type="Gene3D" id="3.40.50.300">
    <property type="entry name" value="P-loop containing nucleotide triphosphate hydrolases"/>
    <property type="match status" value="1"/>
</dbReference>
<dbReference type="Gene3D" id="2.40.30.10">
    <property type="entry name" value="Translation factors"/>
    <property type="match status" value="2"/>
</dbReference>
<dbReference type="HAMAP" id="MF_00118_B">
    <property type="entry name" value="EF_Tu_B"/>
    <property type="match status" value="1"/>
</dbReference>
<dbReference type="InterPro" id="IPR041709">
    <property type="entry name" value="EF-Tu_GTP-bd"/>
</dbReference>
<dbReference type="InterPro" id="IPR050055">
    <property type="entry name" value="EF-Tu_GTPase"/>
</dbReference>
<dbReference type="InterPro" id="IPR004161">
    <property type="entry name" value="EFTu-like_2"/>
</dbReference>
<dbReference type="InterPro" id="IPR033720">
    <property type="entry name" value="EFTU_2"/>
</dbReference>
<dbReference type="InterPro" id="IPR031157">
    <property type="entry name" value="G_TR_CS"/>
</dbReference>
<dbReference type="InterPro" id="IPR027417">
    <property type="entry name" value="P-loop_NTPase"/>
</dbReference>
<dbReference type="InterPro" id="IPR000795">
    <property type="entry name" value="T_Tr_GTP-bd_dom"/>
</dbReference>
<dbReference type="InterPro" id="IPR009000">
    <property type="entry name" value="Transl_B-barrel_sf"/>
</dbReference>
<dbReference type="InterPro" id="IPR009001">
    <property type="entry name" value="Transl_elong_EF1A/Init_IF2_C"/>
</dbReference>
<dbReference type="InterPro" id="IPR004541">
    <property type="entry name" value="Transl_elong_EFTu/EF1A_bac/org"/>
</dbReference>
<dbReference type="InterPro" id="IPR004160">
    <property type="entry name" value="Transl_elong_EFTu/EF1A_C"/>
</dbReference>
<dbReference type="NCBIfam" id="TIGR00485">
    <property type="entry name" value="EF-Tu"/>
    <property type="match status" value="1"/>
</dbReference>
<dbReference type="NCBIfam" id="NF000766">
    <property type="entry name" value="PRK00049.1"/>
    <property type="match status" value="1"/>
</dbReference>
<dbReference type="NCBIfam" id="NF009372">
    <property type="entry name" value="PRK12735.1"/>
    <property type="match status" value="1"/>
</dbReference>
<dbReference type="NCBIfam" id="NF009373">
    <property type="entry name" value="PRK12736.1"/>
    <property type="match status" value="1"/>
</dbReference>
<dbReference type="PANTHER" id="PTHR43721:SF22">
    <property type="entry name" value="ELONGATION FACTOR TU, MITOCHONDRIAL"/>
    <property type="match status" value="1"/>
</dbReference>
<dbReference type="PANTHER" id="PTHR43721">
    <property type="entry name" value="ELONGATION FACTOR TU-RELATED"/>
    <property type="match status" value="1"/>
</dbReference>
<dbReference type="Pfam" id="PF00009">
    <property type="entry name" value="GTP_EFTU"/>
    <property type="match status" value="1"/>
</dbReference>
<dbReference type="Pfam" id="PF03144">
    <property type="entry name" value="GTP_EFTU_D2"/>
    <property type="match status" value="1"/>
</dbReference>
<dbReference type="Pfam" id="PF03143">
    <property type="entry name" value="GTP_EFTU_D3"/>
    <property type="match status" value="1"/>
</dbReference>
<dbReference type="PRINTS" id="PR00315">
    <property type="entry name" value="ELONGATNFCT"/>
</dbReference>
<dbReference type="SUPFAM" id="SSF50465">
    <property type="entry name" value="EF-Tu/eEF-1alpha/eIF2-gamma C-terminal domain"/>
    <property type="match status" value="1"/>
</dbReference>
<dbReference type="SUPFAM" id="SSF52540">
    <property type="entry name" value="P-loop containing nucleoside triphosphate hydrolases"/>
    <property type="match status" value="1"/>
</dbReference>
<dbReference type="SUPFAM" id="SSF50447">
    <property type="entry name" value="Translation proteins"/>
    <property type="match status" value="1"/>
</dbReference>
<dbReference type="PROSITE" id="PS00301">
    <property type="entry name" value="G_TR_1"/>
    <property type="match status" value="1"/>
</dbReference>
<dbReference type="PROSITE" id="PS51722">
    <property type="entry name" value="G_TR_2"/>
    <property type="match status" value="1"/>
</dbReference>
<gene>
    <name evidence="1" type="primary">tuf</name>
</gene>
<proteinExistence type="inferred from homology"/>
<comment type="function">
    <text evidence="1">GTP hydrolase that promotes the GTP-dependent binding of aminoacyl-tRNA to the A-site of ribosomes during protein biosynthesis.</text>
</comment>
<comment type="catalytic activity">
    <reaction evidence="1">
        <text>GTP + H2O = GDP + phosphate + H(+)</text>
        <dbReference type="Rhea" id="RHEA:19669"/>
        <dbReference type="ChEBI" id="CHEBI:15377"/>
        <dbReference type="ChEBI" id="CHEBI:15378"/>
        <dbReference type="ChEBI" id="CHEBI:37565"/>
        <dbReference type="ChEBI" id="CHEBI:43474"/>
        <dbReference type="ChEBI" id="CHEBI:58189"/>
        <dbReference type="EC" id="3.6.5.3"/>
    </reaction>
    <physiologicalReaction direction="left-to-right" evidence="1">
        <dbReference type="Rhea" id="RHEA:19670"/>
    </physiologicalReaction>
</comment>
<comment type="subunit">
    <text evidence="1">Monomer.</text>
</comment>
<comment type="subcellular location">
    <subcellularLocation>
        <location evidence="1">Cytoplasm</location>
    </subcellularLocation>
</comment>
<comment type="similarity">
    <text evidence="1">Belongs to the TRAFAC class translation factor GTPase superfamily. Classic translation factor GTPase family. EF-Tu/EF-1A subfamily.</text>
</comment>
<keyword id="KW-0963">Cytoplasm</keyword>
<keyword id="KW-0251">Elongation factor</keyword>
<keyword id="KW-0342">GTP-binding</keyword>
<keyword id="KW-0378">Hydrolase</keyword>
<keyword id="KW-0460">Magnesium</keyword>
<keyword id="KW-0479">Metal-binding</keyword>
<keyword id="KW-0547">Nucleotide-binding</keyword>
<keyword id="KW-0648">Protein biosynthesis</keyword>
<reference key="1">
    <citation type="journal article" date="1998" name="Mol. Biol. Evol.">
        <title>Evolutionary rates for tuf genes in endosymbionts of aphids.</title>
        <authorList>
            <person name="Brynnel E.U."/>
            <person name="Kurland C.G."/>
            <person name="Moran N.A."/>
            <person name="Andersson S.G."/>
        </authorList>
    </citation>
    <scope>NUCLEOTIDE SEQUENCE [GENOMIC DNA]</scope>
</reference>
<evidence type="ECO:0000255" key="1">
    <source>
        <dbReference type="HAMAP-Rule" id="MF_00118"/>
    </source>
</evidence>
<protein>
    <recommendedName>
        <fullName evidence="1">Elongation factor Tu</fullName>
        <shortName evidence="1">EF-Tu</shortName>
        <ecNumber evidence="1">3.6.5.3</ecNumber>
    </recommendedName>
</protein>
<accession>O31300</accession>
<feature type="chain" id="PRO_0000091300" description="Elongation factor Tu">
    <location>
        <begin position="1" status="less than"/>
        <end position="365" status="greater than"/>
    </location>
</feature>
<feature type="domain" description="tr-type G">
    <location>
        <begin position="1" status="less than"/>
        <end position="185"/>
    </location>
</feature>
<feature type="binding site" evidence="1">
    <location>
        <begin position="1" status="less than"/>
        <end position="7"/>
    </location>
    <ligand>
        <name>GTP</name>
        <dbReference type="ChEBI" id="CHEBI:37565"/>
    </ligand>
</feature>
<feature type="binding site" evidence="1">
    <location>
        <position position="7"/>
    </location>
    <ligand>
        <name>Mg(2+)</name>
        <dbReference type="ChEBI" id="CHEBI:18420"/>
    </ligand>
</feature>
<feature type="binding site" evidence="1">
    <location>
        <begin position="62"/>
        <end position="66"/>
    </location>
    <ligand>
        <name>GTP</name>
        <dbReference type="ChEBI" id="CHEBI:37565"/>
    </ligand>
</feature>
<feature type="binding site" evidence="1">
    <location>
        <begin position="117"/>
        <end position="120"/>
    </location>
    <ligand>
        <name>GTP</name>
        <dbReference type="ChEBI" id="CHEBI:37565"/>
    </ligand>
</feature>
<feature type="non-terminal residue">
    <location>
        <position position="1"/>
    </location>
</feature>
<feature type="non-terminal residue">
    <location>
        <position position="365"/>
    </location>
</feature>
<name>EFTU_BUCMH</name>
<sequence>HVDHGKTTLTAAITTVLAKKYGGSARAFDQIDNAPEEKARGITINTSHVEYDTSLRHYAHVDCPGHADYIKNMITGAAQMDGAILVVAATDGPMPQTREHILLGRQVGVPYIVVFLNKCDMVDDEELLELVEMEVRDLLTQYDFPGDKTPIIRGSALKALEGDCIWESKIIDLANILDTYIPEPKRSIDQPFLLPIEDVFSISGRGTVVTGRVERGIIKVGEEVEIVGIKPTSKTICTGVEMFRKLLDEGRAGENVGVLLRGTKRDDIERGQVLSKPGTITPHIKFESEVYVLSKEEGGRHTPFFKGYRPQFYFRTTDVTGYVELPEGIEMVMPGDNVKMVVTLIHPIAMSDGLRFAIREGGRTV</sequence>
<organism>
    <name type="scientific">Buchnera aphidicola subsp. Melaphis rhois</name>
    <dbReference type="NCBI Taxonomy" id="118103"/>
    <lineage>
        <taxon>Bacteria</taxon>
        <taxon>Pseudomonadati</taxon>
        <taxon>Pseudomonadota</taxon>
        <taxon>Gammaproteobacteria</taxon>
        <taxon>Enterobacterales</taxon>
        <taxon>Erwiniaceae</taxon>
        <taxon>Buchnera</taxon>
    </lineage>
</organism>